<name>UBL4A_PLEMO</name>
<accession>B1MTV8</accession>
<dbReference type="EMBL" id="DP000647">
    <property type="protein sequence ID" value="ACB21228.1"/>
    <property type="molecule type" value="Genomic_DNA"/>
</dbReference>
<dbReference type="BMRB" id="B1MTV8"/>
<dbReference type="SMR" id="B1MTV8"/>
<dbReference type="GO" id="GO:0071818">
    <property type="term" value="C:BAT3 complex"/>
    <property type="evidence" value="ECO:0000250"/>
    <property type="project" value="UniProtKB"/>
</dbReference>
<dbReference type="GO" id="GO:0005829">
    <property type="term" value="C:cytosol"/>
    <property type="evidence" value="ECO:0000250"/>
    <property type="project" value="UniProtKB"/>
</dbReference>
<dbReference type="GO" id="GO:0005634">
    <property type="term" value="C:nucleus"/>
    <property type="evidence" value="ECO:0007669"/>
    <property type="project" value="UniProtKB-SubCell"/>
</dbReference>
<dbReference type="GO" id="GO:0051087">
    <property type="term" value="F:protein-folding chaperone binding"/>
    <property type="evidence" value="ECO:0007669"/>
    <property type="project" value="TreeGrafter"/>
</dbReference>
<dbReference type="GO" id="GO:0006620">
    <property type="term" value="P:post-translational protein targeting to endoplasmic reticulum membrane"/>
    <property type="evidence" value="ECO:0007669"/>
    <property type="project" value="InterPro"/>
</dbReference>
<dbReference type="GO" id="GO:0071816">
    <property type="term" value="P:tail-anchored membrane protein insertion into ER membrane"/>
    <property type="evidence" value="ECO:0000250"/>
    <property type="project" value="UniProtKB"/>
</dbReference>
<dbReference type="CDD" id="cd01807">
    <property type="entry name" value="Ubl_UBL4A_like"/>
    <property type="match status" value="1"/>
</dbReference>
<dbReference type="FunFam" id="3.10.20.90:FF:000144">
    <property type="entry name" value="Ubiquitin-like protein 4A"/>
    <property type="match status" value="1"/>
</dbReference>
<dbReference type="Gene3D" id="3.10.20.90">
    <property type="entry name" value="Phosphatidylinositol 3-kinase Catalytic Subunit, Chain A, domain 1"/>
    <property type="match status" value="1"/>
</dbReference>
<dbReference type="InterPro" id="IPR000626">
    <property type="entry name" value="Ubiquitin-like_dom"/>
</dbReference>
<dbReference type="InterPro" id="IPR029071">
    <property type="entry name" value="Ubiquitin-like_domsf"/>
</dbReference>
<dbReference type="InterPro" id="IPR019954">
    <property type="entry name" value="Ubiquitin_CS"/>
</dbReference>
<dbReference type="InterPro" id="IPR019956">
    <property type="entry name" value="Ubiquitin_dom"/>
</dbReference>
<dbReference type="InterPro" id="IPR041421">
    <property type="entry name" value="Ubl4_C_TUGS"/>
</dbReference>
<dbReference type="InterPro" id="IPR047154">
    <property type="entry name" value="UBL4A-like"/>
</dbReference>
<dbReference type="InterPro" id="IPR044724">
    <property type="entry name" value="Ubl_UBL4A-like"/>
</dbReference>
<dbReference type="PANTHER" id="PTHR46555">
    <property type="entry name" value="UBIQUITIN-LIKE PROTEIN 4A"/>
    <property type="match status" value="1"/>
</dbReference>
<dbReference type="PANTHER" id="PTHR46555:SF1">
    <property type="entry name" value="UBIQUITIN-LIKE PROTEIN 4A"/>
    <property type="match status" value="1"/>
</dbReference>
<dbReference type="Pfam" id="PF17840">
    <property type="entry name" value="Tugs"/>
    <property type="match status" value="1"/>
</dbReference>
<dbReference type="Pfam" id="PF00240">
    <property type="entry name" value="ubiquitin"/>
    <property type="match status" value="1"/>
</dbReference>
<dbReference type="PRINTS" id="PR00348">
    <property type="entry name" value="UBIQUITIN"/>
</dbReference>
<dbReference type="SMART" id="SM00213">
    <property type="entry name" value="UBQ"/>
    <property type="match status" value="1"/>
</dbReference>
<dbReference type="SUPFAM" id="SSF54236">
    <property type="entry name" value="Ubiquitin-like"/>
    <property type="match status" value="1"/>
</dbReference>
<dbReference type="PROSITE" id="PS00299">
    <property type="entry name" value="UBIQUITIN_1"/>
    <property type="match status" value="1"/>
</dbReference>
<dbReference type="PROSITE" id="PS50053">
    <property type="entry name" value="UBIQUITIN_2"/>
    <property type="match status" value="1"/>
</dbReference>
<gene>
    <name type="primary">UBL4A</name>
</gene>
<keyword id="KW-0963">Cytoplasm</keyword>
<keyword id="KW-1017">Isopeptide bond</keyword>
<keyword id="KW-0539">Nucleus</keyword>
<keyword id="KW-0597">Phosphoprotein</keyword>
<keyword id="KW-0813">Transport</keyword>
<keyword id="KW-0832">Ubl conjugation</keyword>
<evidence type="ECO:0000250" key="1">
    <source>
        <dbReference type="UniProtKB" id="P11441"/>
    </source>
</evidence>
<evidence type="ECO:0000255" key="2">
    <source>
        <dbReference type="PROSITE-ProRule" id="PRU00214"/>
    </source>
</evidence>
<sequence length="157" mass="17736">MQLTVKALQGRECSLQVPEDELVSTLKQLVSEKLNVPVRQQRLLFKGKALADGKRLSDYSIGPNSKLNLVVKPLEKVLLEEGAGRRLADSPPTQVWQLISKVLARHFSAADASRVLEQLQRDYQRSLSRLTLDDIERLASRFLHPEVTETMEKGFSK</sequence>
<feature type="chain" id="PRO_0000403735" description="Ubiquitin-like protein 4A">
    <location>
        <begin position="1"/>
        <end position="157"/>
    </location>
</feature>
<feature type="domain" description="Ubiquitin-like" evidence="2">
    <location>
        <begin position="1"/>
        <end position="76"/>
    </location>
</feature>
<feature type="region of interest" description="Required and sufficient for interaction with BAG6" evidence="1">
    <location>
        <begin position="96"/>
        <end position="138"/>
    </location>
</feature>
<feature type="modified residue" description="Phosphoserine" evidence="1">
    <location>
        <position position="90"/>
    </location>
</feature>
<feature type="cross-link" description="Glycyl lysine isopeptide (Lys-Gly) (interchain with G-Cter in ubiquitin)" evidence="1">
    <location>
        <position position="48"/>
    </location>
</feature>
<proteinExistence type="inferred from homology"/>
<comment type="function">
    <text evidence="1">As part of a cytosolic protein quality control complex, the BAG6/BAT3 complex, maintains misfolded and hydrophobic patches-containing proteins in a soluble state and participates in their proper delivery to the endoplasmic reticulum or alternatively can promote their sorting to the proteasome where they undergo degradation. The BAG6/BAT3 complex is involved in the post-translational delivery of tail-anchored/type II transmembrane proteins to the endoplasmic reticulum membrane. Recruited to ribosomes, it interacts with the transmembrane region of newly synthesized tail-anchored proteins and together with SGTA and ASNA1 mediates their delivery to the endoplasmic reticulum. Client proteins that cannot be properly delivered to the endoplasmic reticulum are ubiquitinated and sorted to the proteasome. Similarly, the BAG6/BAT3 complex also functions as a sorting platform for proteins of the secretory pathway that are mislocalized to the cytosol either delivering them to the proteasome for degradation or to the endoplasmic reticulum. The BAG6/BAT3 complex also plays a role in the endoplasmic reticulum-associated degradation (ERAD), a quality control mechanism that eliminates unwanted proteins of the endoplasmic reticulum through their retrotranslocation to the cytosol and their targeting to the proteasome. It maintains these retrotranslocated proteins in an unfolded yet soluble state condition in the cytosol to ensure their proper delivery to the proteasome.</text>
</comment>
<comment type="subunit">
    <text evidence="1">Component of the BAG6/BAT3 complex, at least composed of BAG6, UBL4A and GET4/TRC35. Interacts with BAG6; the interaction is direct and required for UBL4A protein stability. Interacts with USP13; may be indirect via BAG6.</text>
</comment>
<comment type="subcellular location">
    <subcellularLocation>
        <location evidence="1">Cytoplasm</location>
        <location evidence="1">Cytosol</location>
    </subcellularLocation>
    <subcellularLocation>
        <location evidence="1">Nucleus</location>
    </subcellularLocation>
</comment>
<comment type="PTM">
    <text evidence="1">Polyubiquitinated. Ubiquitination by AMFR and deubiquitination by USP13 may regulate the interaction between the BAG6/BAT complex and SGTA and therefore may regulate client proteins fate.</text>
</comment>
<protein>
    <recommendedName>
        <fullName>Ubiquitin-like protein 4A</fullName>
    </recommendedName>
</protein>
<organism>
    <name type="scientific">Plecturocebus moloch</name>
    <name type="common">Dusky titi monkey</name>
    <name type="synonym">Callicebus moloch</name>
    <dbReference type="NCBI Taxonomy" id="9523"/>
    <lineage>
        <taxon>Eukaryota</taxon>
        <taxon>Metazoa</taxon>
        <taxon>Chordata</taxon>
        <taxon>Craniata</taxon>
        <taxon>Vertebrata</taxon>
        <taxon>Euteleostomi</taxon>
        <taxon>Mammalia</taxon>
        <taxon>Eutheria</taxon>
        <taxon>Euarchontoglires</taxon>
        <taxon>Primates</taxon>
        <taxon>Haplorrhini</taxon>
        <taxon>Platyrrhini</taxon>
        <taxon>Pitheciidae</taxon>
        <taxon>Callicebinae</taxon>
        <taxon>Plecturocebus</taxon>
    </lineage>
</organism>
<reference key="1">
    <citation type="submission" date="2008-03" db="EMBL/GenBank/DDBJ databases">
        <title>NISC comparative sequencing initiative.</title>
        <authorList>
            <person name="Antonellis A."/>
            <person name="Ayele K."/>
            <person name="Benjamin B."/>
            <person name="Blakesley R.W."/>
            <person name="Boakye A."/>
            <person name="Bouffard G.G."/>
            <person name="Brinkley C."/>
            <person name="Brooks S."/>
            <person name="Chu G."/>
            <person name="Coleman H."/>
            <person name="Engle J."/>
            <person name="Gestole M."/>
            <person name="Greene A."/>
            <person name="Guan X."/>
            <person name="Gupta J."/>
            <person name="Haghighi P."/>
            <person name="Han J."/>
            <person name="Hansen N."/>
            <person name="Ho S.-L."/>
            <person name="Hu P."/>
            <person name="Hunter G."/>
            <person name="Hurle B."/>
            <person name="Idol J.R."/>
            <person name="Kwong P."/>
            <person name="Laric P."/>
            <person name="Larson S."/>
            <person name="Lee-Lin S.-Q."/>
            <person name="Legaspi R."/>
            <person name="Madden M."/>
            <person name="Maduro Q.L."/>
            <person name="Maduro V.B."/>
            <person name="Margulies E.H."/>
            <person name="Masiello C."/>
            <person name="Maskeri B."/>
            <person name="McDowell J."/>
            <person name="Mojidi H.A."/>
            <person name="Mullikin J.C."/>
            <person name="Oestreicher J.S."/>
            <person name="Park M."/>
            <person name="Portnoy M.E."/>
            <person name="Prasad A."/>
            <person name="Puri O."/>
            <person name="Reddix-Dugue N."/>
            <person name="Schandler K."/>
            <person name="Schueler M.G."/>
            <person name="Sison C."/>
            <person name="Stantripop S."/>
            <person name="Stephen E."/>
            <person name="Taye A."/>
            <person name="Thomas J.W."/>
            <person name="Thomas P.J."/>
            <person name="Tsipouri V."/>
            <person name="Ung L."/>
            <person name="Vogt J.L."/>
            <person name="Wetherby K.D."/>
            <person name="Young A."/>
            <person name="Green E.D."/>
        </authorList>
    </citation>
    <scope>NUCLEOTIDE SEQUENCE [LARGE SCALE GENOMIC DNA]</scope>
</reference>